<proteinExistence type="inferred from homology"/>
<name>CITD_VIBC3</name>
<gene>
    <name evidence="1" type="primary">citD</name>
    <name type="ordered locus">VC0395_A0324</name>
    <name type="ordered locus">VC395_0814</name>
</gene>
<comment type="function">
    <text evidence="1">Covalent carrier of the coenzyme of citrate lyase.</text>
</comment>
<comment type="subunit">
    <text evidence="1">Oligomer with a subunit composition of (alpha,beta,gamma)6.</text>
</comment>
<comment type="subcellular location">
    <subcellularLocation>
        <location evidence="1">Cytoplasm</location>
    </subcellularLocation>
</comment>
<comment type="similarity">
    <text evidence="1">Belongs to the CitD family.</text>
</comment>
<sequence>MKIAHPAFAGTLESSDLQVRIEPNNDGGIELVLDSTVEQRFGHAIRQVVLHTLDAMQVHDALVTIEDKGALDCVIRARVQAAVMRACDVQNIEWSQLS</sequence>
<accession>A5F3C2</accession>
<accession>C3LYG5</accession>
<evidence type="ECO:0000255" key="1">
    <source>
        <dbReference type="HAMAP-Rule" id="MF_00805"/>
    </source>
</evidence>
<keyword id="KW-0963">Cytoplasm</keyword>
<keyword id="KW-0597">Phosphoprotein</keyword>
<organism>
    <name type="scientific">Vibrio cholerae serotype O1 (strain ATCC 39541 / Classical Ogawa 395 / O395)</name>
    <dbReference type="NCBI Taxonomy" id="345073"/>
    <lineage>
        <taxon>Bacteria</taxon>
        <taxon>Pseudomonadati</taxon>
        <taxon>Pseudomonadota</taxon>
        <taxon>Gammaproteobacteria</taxon>
        <taxon>Vibrionales</taxon>
        <taxon>Vibrionaceae</taxon>
        <taxon>Vibrio</taxon>
    </lineage>
</organism>
<reference key="1">
    <citation type="submission" date="2007-03" db="EMBL/GenBank/DDBJ databases">
        <authorList>
            <person name="Heidelberg J."/>
        </authorList>
    </citation>
    <scope>NUCLEOTIDE SEQUENCE [LARGE SCALE GENOMIC DNA]</scope>
    <source>
        <strain>ATCC 39541 / Classical Ogawa 395 / O395</strain>
    </source>
</reference>
<reference key="2">
    <citation type="journal article" date="2008" name="PLoS ONE">
        <title>A recalibrated molecular clock and independent origins for the cholera pandemic clones.</title>
        <authorList>
            <person name="Feng L."/>
            <person name="Reeves P.R."/>
            <person name="Lan R."/>
            <person name="Ren Y."/>
            <person name="Gao C."/>
            <person name="Zhou Z."/>
            <person name="Ren Y."/>
            <person name="Cheng J."/>
            <person name="Wang W."/>
            <person name="Wang J."/>
            <person name="Qian W."/>
            <person name="Li D."/>
            <person name="Wang L."/>
        </authorList>
    </citation>
    <scope>NUCLEOTIDE SEQUENCE [LARGE SCALE GENOMIC DNA]</scope>
    <source>
        <strain>ATCC 39541 / Classical Ogawa 395 / O395</strain>
    </source>
</reference>
<feature type="chain" id="PRO_1000072851" description="Citrate lyase acyl carrier protein">
    <location>
        <begin position="1"/>
        <end position="98"/>
    </location>
</feature>
<feature type="modified residue" description="O-(phosphoribosyl dephospho-coenzyme A)serine" evidence="1">
    <location>
        <position position="14"/>
    </location>
</feature>
<dbReference type="EMBL" id="CP000627">
    <property type="protein sequence ID" value="ABQ20346.1"/>
    <property type="molecule type" value="Genomic_DNA"/>
</dbReference>
<dbReference type="EMBL" id="CP001235">
    <property type="protein sequence ID" value="ACP08831.1"/>
    <property type="molecule type" value="Genomic_DNA"/>
</dbReference>
<dbReference type="RefSeq" id="WP_000684019.1">
    <property type="nucleotide sequence ID" value="NZ_JAACZH010000017.1"/>
</dbReference>
<dbReference type="SMR" id="A5F3C2"/>
<dbReference type="KEGG" id="vco:VC0395_A0324"/>
<dbReference type="KEGG" id="vcr:VC395_0814"/>
<dbReference type="PATRIC" id="fig|345073.21.peg.786"/>
<dbReference type="eggNOG" id="COG3052">
    <property type="taxonomic scope" value="Bacteria"/>
</dbReference>
<dbReference type="HOGENOM" id="CLU_158489_0_0_6"/>
<dbReference type="OrthoDB" id="9798736at2"/>
<dbReference type="Proteomes" id="UP000000249">
    <property type="component" value="Chromosome 2"/>
</dbReference>
<dbReference type="GO" id="GO:0005737">
    <property type="term" value="C:cytoplasm"/>
    <property type="evidence" value="ECO:0007669"/>
    <property type="project" value="UniProtKB-SubCell"/>
</dbReference>
<dbReference type="HAMAP" id="MF_00805">
    <property type="entry name" value="CitD"/>
    <property type="match status" value="1"/>
</dbReference>
<dbReference type="InterPro" id="IPR006495">
    <property type="entry name" value="CitD"/>
</dbReference>
<dbReference type="InterPro" id="IPR023439">
    <property type="entry name" value="Mal_deCO2ase/Cit_lyase_ACP"/>
</dbReference>
<dbReference type="NCBIfam" id="TIGR01608">
    <property type="entry name" value="citD"/>
    <property type="match status" value="1"/>
</dbReference>
<dbReference type="NCBIfam" id="NF009726">
    <property type="entry name" value="PRK13253.1"/>
    <property type="match status" value="1"/>
</dbReference>
<dbReference type="Pfam" id="PF06857">
    <property type="entry name" value="ACP"/>
    <property type="match status" value="1"/>
</dbReference>
<dbReference type="PIRSF" id="PIRSF002736">
    <property type="entry name" value="Citrt_lyas_gamma"/>
    <property type="match status" value="1"/>
</dbReference>
<protein>
    <recommendedName>
        <fullName evidence="1">Citrate lyase acyl carrier protein</fullName>
    </recommendedName>
    <alternativeName>
        <fullName evidence="1">Citrate lyase gamma chain</fullName>
    </alternativeName>
</protein>